<proteinExistence type="inferred from homology"/>
<organism>
    <name type="scientific">Shigella boydii serotype 4 (strain Sb227)</name>
    <dbReference type="NCBI Taxonomy" id="300268"/>
    <lineage>
        <taxon>Bacteria</taxon>
        <taxon>Pseudomonadati</taxon>
        <taxon>Pseudomonadota</taxon>
        <taxon>Gammaproteobacteria</taxon>
        <taxon>Enterobacterales</taxon>
        <taxon>Enterobacteriaceae</taxon>
        <taxon>Shigella</taxon>
    </lineage>
</organism>
<protein>
    <recommendedName>
        <fullName evidence="1">sn-glycerol-3-phosphate import ATP-binding protein UgpC</fullName>
        <ecNumber evidence="1">7.6.2.10</ecNumber>
    </recommendedName>
</protein>
<name>UGPC_SHIBS</name>
<feature type="chain" id="PRO_0000289782" description="sn-glycerol-3-phosphate import ATP-binding protein UgpC">
    <location>
        <begin position="1"/>
        <end position="356"/>
    </location>
</feature>
<feature type="domain" description="ABC transporter" evidence="1">
    <location>
        <begin position="4"/>
        <end position="235"/>
    </location>
</feature>
<feature type="binding site" evidence="1">
    <location>
        <begin position="37"/>
        <end position="44"/>
    </location>
    <ligand>
        <name>ATP</name>
        <dbReference type="ChEBI" id="CHEBI:30616"/>
    </ligand>
</feature>
<evidence type="ECO:0000255" key="1">
    <source>
        <dbReference type="HAMAP-Rule" id="MF_01727"/>
    </source>
</evidence>
<evidence type="ECO:0000305" key="2"/>
<keyword id="KW-0067">ATP-binding</keyword>
<keyword id="KW-0997">Cell inner membrane</keyword>
<keyword id="KW-1003">Cell membrane</keyword>
<keyword id="KW-0472">Membrane</keyword>
<keyword id="KW-0547">Nucleotide-binding</keyword>
<keyword id="KW-0762">Sugar transport</keyword>
<keyword id="KW-1278">Translocase</keyword>
<keyword id="KW-0813">Transport</keyword>
<accession>Q31VH5</accession>
<comment type="function">
    <text evidence="1">Part of the ABC transporter complex UgpBAEC involved in sn-glycerol-3-phosphate (G3P) import. Responsible for energy coupling to the transport system.</text>
</comment>
<comment type="catalytic activity">
    <reaction evidence="1">
        <text>sn-glycerol 3-phosphate(out) + ATP + H2O = sn-glycerol 3-phosphate(in) + ADP + phosphate + H(+)</text>
        <dbReference type="Rhea" id="RHEA:21668"/>
        <dbReference type="ChEBI" id="CHEBI:15377"/>
        <dbReference type="ChEBI" id="CHEBI:15378"/>
        <dbReference type="ChEBI" id="CHEBI:30616"/>
        <dbReference type="ChEBI" id="CHEBI:43474"/>
        <dbReference type="ChEBI" id="CHEBI:57597"/>
        <dbReference type="ChEBI" id="CHEBI:456216"/>
        <dbReference type="EC" id="7.6.2.10"/>
    </reaction>
</comment>
<comment type="subunit">
    <text evidence="1">The complex is composed of two ATP-binding proteins (UgpC), two transmembrane proteins (UgpA and UgpE) and a solute-binding protein (UgpB).</text>
</comment>
<comment type="subcellular location">
    <subcellularLocation>
        <location evidence="1">Cell inner membrane</location>
        <topology evidence="1">Peripheral membrane protein</topology>
    </subcellularLocation>
</comment>
<comment type="similarity">
    <text evidence="1">Belongs to the ABC transporter superfamily. sn-glycerol-3-phosphate importer (TC 3.A.1.1.3) family.</text>
</comment>
<comment type="sequence caution" evidence="2">
    <conflict type="erroneous initiation">
        <sequence resource="EMBL-CDS" id="ABB67933"/>
    </conflict>
</comment>
<reference key="1">
    <citation type="journal article" date="2005" name="Nucleic Acids Res.">
        <title>Genome dynamics and diversity of Shigella species, the etiologic agents of bacillary dysentery.</title>
        <authorList>
            <person name="Yang F."/>
            <person name="Yang J."/>
            <person name="Zhang X."/>
            <person name="Chen L."/>
            <person name="Jiang Y."/>
            <person name="Yan Y."/>
            <person name="Tang X."/>
            <person name="Wang J."/>
            <person name="Xiong Z."/>
            <person name="Dong J."/>
            <person name="Xue Y."/>
            <person name="Zhu Y."/>
            <person name="Xu X."/>
            <person name="Sun L."/>
            <person name="Chen S."/>
            <person name="Nie H."/>
            <person name="Peng J."/>
            <person name="Xu J."/>
            <person name="Wang Y."/>
            <person name="Yuan Z."/>
            <person name="Wen Y."/>
            <person name="Yao Z."/>
            <person name="Shen Y."/>
            <person name="Qiang B."/>
            <person name="Hou Y."/>
            <person name="Yu J."/>
            <person name="Jin Q."/>
        </authorList>
    </citation>
    <scope>NUCLEOTIDE SEQUENCE [LARGE SCALE GENOMIC DNA]</scope>
    <source>
        <strain>Sb227</strain>
    </source>
</reference>
<sequence>MAGLKLQAVTKSWDGKTQVIKPLTLDVADGEFIVMVGPSGCGKSTLLRMVAGLERVTEGDIWINDQRVTEMEPKDRGIAMVFQNYALYPHMSVEENMAWGLKIRGMGKQQIAERVKEAARILELDGLLKRRPRELSGGQRQRVAMGRAIVRDPAVFLFDEPLSNLDAKLRVQMRLELQQLHRRLKTTSLYVTHDQVEAMTLAQRVMVMNGGVAEQIGTPVEVYEKPASLFVASFIGSPAMNLLTGRVNNEGTHFELDGGIELPLNGGYRQYAGRKMTLGIRPEHIVLSSQAEGGVPLVMDTLEILGADNLAHGRWGEQKLVVRLAHQERPTAGSTLWLHLAENQLHLFDGETGQRV</sequence>
<gene>
    <name evidence="1" type="primary">ugpC</name>
    <name type="ordered locus">SBO_3446</name>
</gene>
<dbReference type="EC" id="7.6.2.10" evidence="1"/>
<dbReference type="EMBL" id="CP000036">
    <property type="protein sequence ID" value="ABB67933.1"/>
    <property type="status" value="ALT_INIT"/>
    <property type="molecule type" value="Genomic_DNA"/>
</dbReference>
<dbReference type="RefSeq" id="WP_000907794.1">
    <property type="nucleotide sequence ID" value="NC_007613.1"/>
</dbReference>
<dbReference type="SMR" id="Q31VH5"/>
<dbReference type="KEGG" id="sbo:SBO_3446"/>
<dbReference type="HOGENOM" id="CLU_000604_1_1_6"/>
<dbReference type="Proteomes" id="UP000007067">
    <property type="component" value="Chromosome"/>
</dbReference>
<dbReference type="GO" id="GO:0055052">
    <property type="term" value="C:ATP-binding cassette (ABC) transporter complex, substrate-binding subunit-containing"/>
    <property type="evidence" value="ECO:0007669"/>
    <property type="project" value="TreeGrafter"/>
</dbReference>
<dbReference type="GO" id="GO:0015430">
    <property type="term" value="F:ABC-type glycerol-3-phosphate transporter activity"/>
    <property type="evidence" value="ECO:0007669"/>
    <property type="project" value="UniProtKB-EC"/>
</dbReference>
<dbReference type="GO" id="GO:0005524">
    <property type="term" value="F:ATP binding"/>
    <property type="evidence" value="ECO:0007669"/>
    <property type="project" value="UniProtKB-KW"/>
</dbReference>
<dbReference type="GO" id="GO:0016887">
    <property type="term" value="F:ATP hydrolysis activity"/>
    <property type="evidence" value="ECO:0007669"/>
    <property type="project" value="InterPro"/>
</dbReference>
<dbReference type="GO" id="GO:0008643">
    <property type="term" value="P:carbohydrate transport"/>
    <property type="evidence" value="ECO:0007669"/>
    <property type="project" value="InterPro"/>
</dbReference>
<dbReference type="GO" id="GO:0001407">
    <property type="term" value="P:glycerophosphodiester transmembrane transport"/>
    <property type="evidence" value="ECO:0007669"/>
    <property type="project" value="TreeGrafter"/>
</dbReference>
<dbReference type="CDD" id="cd03301">
    <property type="entry name" value="ABC_MalK_N"/>
    <property type="match status" value="1"/>
</dbReference>
<dbReference type="FunFam" id="3.40.50.300:FF:000042">
    <property type="entry name" value="Maltose/maltodextrin ABC transporter, ATP-binding protein"/>
    <property type="match status" value="1"/>
</dbReference>
<dbReference type="FunFam" id="2.40.50.100:FF:000032">
    <property type="entry name" value="sn-glycerol-3-phosphate import ATP-binding protein UgpC"/>
    <property type="match status" value="1"/>
</dbReference>
<dbReference type="FunFam" id="2.40.50.140:FF:000142">
    <property type="entry name" value="sn-glycerol-3-phosphate import ATP-binding protein UgpC"/>
    <property type="match status" value="1"/>
</dbReference>
<dbReference type="Gene3D" id="2.40.50.100">
    <property type="match status" value="1"/>
</dbReference>
<dbReference type="Gene3D" id="2.40.50.140">
    <property type="entry name" value="Nucleic acid-binding proteins"/>
    <property type="match status" value="1"/>
</dbReference>
<dbReference type="Gene3D" id="3.40.50.300">
    <property type="entry name" value="P-loop containing nucleotide triphosphate hydrolases"/>
    <property type="match status" value="1"/>
</dbReference>
<dbReference type="InterPro" id="IPR003593">
    <property type="entry name" value="AAA+_ATPase"/>
</dbReference>
<dbReference type="InterPro" id="IPR003439">
    <property type="entry name" value="ABC_transporter-like_ATP-bd"/>
</dbReference>
<dbReference type="InterPro" id="IPR017871">
    <property type="entry name" value="ABC_transporter-like_CS"/>
</dbReference>
<dbReference type="InterPro" id="IPR015855">
    <property type="entry name" value="ABC_transpr_MalK-like"/>
</dbReference>
<dbReference type="InterPro" id="IPR047641">
    <property type="entry name" value="ABC_transpr_MalK/UgpC-like"/>
</dbReference>
<dbReference type="InterPro" id="IPR008995">
    <property type="entry name" value="Mo/tungstate-bd_C_term_dom"/>
</dbReference>
<dbReference type="InterPro" id="IPR012340">
    <property type="entry name" value="NA-bd_OB-fold"/>
</dbReference>
<dbReference type="InterPro" id="IPR040582">
    <property type="entry name" value="OB_MalK-like"/>
</dbReference>
<dbReference type="InterPro" id="IPR027417">
    <property type="entry name" value="P-loop_NTPase"/>
</dbReference>
<dbReference type="NCBIfam" id="NF008653">
    <property type="entry name" value="PRK11650.1"/>
    <property type="match status" value="1"/>
</dbReference>
<dbReference type="PANTHER" id="PTHR43875">
    <property type="entry name" value="MALTODEXTRIN IMPORT ATP-BINDING PROTEIN MSMX"/>
    <property type="match status" value="1"/>
</dbReference>
<dbReference type="PANTHER" id="PTHR43875:SF12">
    <property type="entry name" value="SN-GLYCEROL-3-PHOSPHATE IMPORT ATP-BINDING PROTEIN UGPC"/>
    <property type="match status" value="1"/>
</dbReference>
<dbReference type="Pfam" id="PF00005">
    <property type="entry name" value="ABC_tran"/>
    <property type="match status" value="1"/>
</dbReference>
<dbReference type="Pfam" id="PF17912">
    <property type="entry name" value="OB_MalK"/>
    <property type="match status" value="1"/>
</dbReference>
<dbReference type="SMART" id="SM00382">
    <property type="entry name" value="AAA"/>
    <property type="match status" value="1"/>
</dbReference>
<dbReference type="SUPFAM" id="SSF50331">
    <property type="entry name" value="MOP-like"/>
    <property type="match status" value="1"/>
</dbReference>
<dbReference type="SUPFAM" id="SSF52540">
    <property type="entry name" value="P-loop containing nucleoside triphosphate hydrolases"/>
    <property type="match status" value="1"/>
</dbReference>
<dbReference type="PROSITE" id="PS00211">
    <property type="entry name" value="ABC_TRANSPORTER_1"/>
    <property type="match status" value="1"/>
</dbReference>
<dbReference type="PROSITE" id="PS50893">
    <property type="entry name" value="ABC_TRANSPORTER_2"/>
    <property type="match status" value="1"/>
</dbReference>
<dbReference type="PROSITE" id="PS51315">
    <property type="entry name" value="UGPC"/>
    <property type="match status" value="1"/>
</dbReference>